<keyword id="KW-0067">ATP-binding</keyword>
<keyword id="KW-0997">Cell inner membrane</keyword>
<keyword id="KW-1003">Cell membrane</keyword>
<keyword id="KW-0963">Cytoplasm</keyword>
<keyword id="KW-0472">Membrane</keyword>
<keyword id="KW-0547">Nucleotide-binding</keyword>
<keyword id="KW-0653">Protein transport</keyword>
<keyword id="KW-1278">Translocase</keyword>
<keyword id="KW-0811">Translocation</keyword>
<keyword id="KW-0813">Transport</keyword>
<gene>
    <name evidence="1" type="primary">secA2</name>
    <name type="ordered locus">RPE_4582</name>
</gene>
<feature type="chain" id="PRO_0000318418" description="Protein translocase subunit SecA 2">
    <location>
        <begin position="1"/>
        <end position="813"/>
    </location>
</feature>
<feature type="binding site" evidence="1">
    <location>
        <position position="105"/>
    </location>
    <ligand>
        <name>ATP</name>
        <dbReference type="ChEBI" id="CHEBI:30616"/>
    </ligand>
</feature>
<feature type="binding site" evidence="1">
    <location>
        <begin position="123"/>
        <end position="127"/>
    </location>
    <ligand>
        <name>ATP</name>
        <dbReference type="ChEBI" id="CHEBI:30616"/>
    </ligand>
</feature>
<feature type="binding site" evidence="1">
    <location>
        <position position="525"/>
    </location>
    <ligand>
        <name>ATP</name>
        <dbReference type="ChEBI" id="CHEBI:30616"/>
    </ligand>
</feature>
<organism>
    <name type="scientific">Rhodopseudomonas palustris (strain BisA53)</name>
    <dbReference type="NCBI Taxonomy" id="316055"/>
    <lineage>
        <taxon>Bacteria</taxon>
        <taxon>Pseudomonadati</taxon>
        <taxon>Pseudomonadota</taxon>
        <taxon>Alphaproteobacteria</taxon>
        <taxon>Hyphomicrobiales</taxon>
        <taxon>Nitrobacteraceae</taxon>
        <taxon>Rhodopseudomonas</taxon>
    </lineage>
</organism>
<protein>
    <recommendedName>
        <fullName evidence="1">Protein translocase subunit SecA 2</fullName>
        <ecNumber evidence="1">7.4.2.8</ecNumber>
    </recommendedName>
</protein>
<reference key="1">
    <citation type="submission" date="2006-09" db="EMBL/GenBank/DDBJ databases">
        <title>Complete sequence of Rhodopseudomonas palustris BisA53.</title>
        <authorList>
            <consortium name="US DOE Joint Genome Institute"/>
            <person name="Copeland A."/>
            <person name="Lucas S."/>
            <person name="Lapidus A."/>
            <person name="Barry K."/>
            <person name="Detter J.C."/>
            <person name="Glavina del Rio T."/>
            <person name="Hammon N."/>
            <person name="Israni S."/>
            <person name="Dalin E."/>
            <person name="Tice H."/>
            <person name="Pitluck S."/>
            <person name="Chain P."/>
            <person name="Malfatti S."/>
            <person name="Shin M."/>
            <person name="Vergez L."/>
            <person name="Schmutz J."/>
            <person name="Larimer F."/>
            <person name="Land M."/>
            <person name="Hauser L."/>
            <person name="Pelletier D.A."/>
            <person name="Kyrpides N."/>
            <person name="Kim E."/>
            <person name="Harwood C.S."/>
            <person name="Oda Y."/>
            <person name="Richardson P."/>
        </authorList>
    </citation>
    <scope>NUCLEOTIDE SEQUENCE [LARGE SCALE GENOMIC DNA]</scope>
    <source>
        <strain>BisA53</strain>
    </source>
</reference>
<accession>Q07HT2</accession>
<evidence type="ECO:0000255" key="1">
    <source>
        <dbReference type="HAMAP-Rule" id="MF_01382"/>
    </source>
</evidence>
<comment type="function">
    <text evidence="1">Part of the Sec protein translocase complex. Interacts with the SecYEG preprotein conducting channel. Has a central role in coupling the hydrolysis of ATP to the transfer of proteins into and across the cell membrane, serving both as a receptor for the preprotein-SecB complex and as an ATP-driven molecular motor driving the stepwise translocation of polypeptide chains across the membrane.</text>
</comment>
<comment type="catalytic activity">
    <reaction evidence="1">
        <text>ATP + H2O + cellular proteinSide 1 = ADP + phosphate + cellular proteinSide 2.</text>
        <dbReference type="EC" id="7.4.2.8"/>
    </reaction>
</comment>
<comment type="subunit">
    <text evidence="1">Monomer and homodimer. Part of the essential Sec protein translocation apparatus which comprises SecA, SecYEG and auxiliary proteins SecDF-YajC and YidC.</text>
</comment>
<comment type="subcellular location">
    <subcellularLocation>
        <location evidence="1">Cell inner membrane</location>
        <topology evidence="1">Peripheral membrane protein</topology>
        <orientation evidence="1">Cytoplasmic side</orientation>
    </subcellularLocation>
    <subcellularLocation>
        <location evidence="1">Cytoplasm</location>
    </subcellularLocation>
    <text evidence="1">Distribution is 50-50.</text>
</comment>
<comment type="similarity">
    <text evidence="1">Belongs to the SecA family.</text>
</comment>
<dbReference type="EC" id="7.4.2.8" evidence="1"/>
<dbReference type="EMBL" id="CP000463">
    <property type="protein sequence ID" value="ABJ08502.1"/>
    <property type="molecule type" value="Genomic_DNA"/>
</dbReference>
<dbReference type="SMR" id="Q07HT2"/>
<dbReference type="STRING" id="316055.RPE_4582"/>
<dbReference type="KEGG" id="rpe:RPE_4582"/>
<dbReference type="eggNOG" id="COG0653">
    <property type="taxonomic scope" value="Bacteria"/>
</dbReference>
<dbReference type="HOGENOM" id="CLU_005314_3_0_5"/>
<dbReference type="OrthoDB" id="9805579at2"/>
<dbReference type="GO" id="GO:0031522">
    <property type="term" value="C:cell envelope Sec protein transport complex"/>
    <property type="evidence" value="ECO:0007669"/>
    <property type="project" value="TreeGrafter"/>
</dbReference>
<dbReference type="GO" id="GO:0005829">
    <property type="term" value="C:cytosol"/>
    <property type="evidence" value="ECO:0007669"/>
    <property type="project" value="TreeGrafter"/>
</dbReference>
<dbReference type="GO" id="GO:0005886">
    <property type="term" value="C:plasma membrane"/>
    <property type="evidence" value="ECO:0007669"/>
    <property type="project" value="UniProtKB-SubCell"/>
</dbReference>
<dbReference type="GO" id="GO:0005524">
    <property type="term" value="F:ATP binding"/>
    <property type="evidence" value="ECO:0007669"/>
    <property type="project" value="UniProtKB-UniRule"/>
</dbReference>
<dbReference type="GO" id="GO:0008564">
    <property type="term" value="F:protein-exporting ATPase activity"/>
    <property type="evidence" value="ECO:0007669"/>
    <property type="project" value="UniProtKB-EC"/>
</dbReference>
<dbReference type="GO" id="GO:0065002">
    <property type="term" value="P:intracellular protein transmembrane transport"/>
    <property type="evidence" value="ECO:0007669"/>
    <property type="project" value="UniProtKB-UniRule"/>
</dbReference>
<dbReference type="GO" id="GO:0017038">
    <property type="term" value="P:protein import"/>
    <property type="evidence" value="ECO:0007669"/>
    <property type="project" value="InterPro"/>
</dbReference>
<dbReference type="GO" id="GO:0006605">
    <property type="term" value="P:protein targeting"/>
    <property type="evidence" value="ECO:0007669"/>
    <property type="project" value="UniProtKB-UniRule"/>
</dbReference>
<dbReference type="GO" id="GO:0043952">
    <property type="term" value="P:protein transport by the Sec complex"/>
    <property type="evidence" value="ECO:0007669"/>
    <property type="project" value="TreeGrafter"/>
</dbReference>
<dbReference type="CDD" id="cd17928">
    <property type="entry name" value="DEXDc_SecA"/>
    <property type="match status" value="1"/>
</dbReference>
<dbReference type="CDD" id="cd18803">
    <property type="entry name" value="SF2_C_secA"/>
    <property type="match status" value="1"/>
</dbReference>
<dbReference type="FunFam" id="3.40.50.300:FF:000429">
    <property type="entry name" value="Preprotein translocase subunit SecA"/>
    <property type="match status" value="1"/>
</dbReference>
<dbReference type="Gene3D" id="1.10.3060.10">
    <property type="entry name" value="Helical scaffold and wing domains of SecA"/>
    <property type="match status" value="1"/>
</dbReference>
<dbReference type="Gene3D" id="3.40.50.300">
    <property type="entry name" value="P-loop containing nucleotide triphosphate hydrolases"/>
    <property type="match status" value="3"/>
</dbReference>
<dbReference type="Gene3D" id="3.90.1440.10">
    <property type="entry name" value="SecA, preprotein cross-linking domain"/>
    <property type="match status" value="1"/>
</dbReference>
<dbReference type="HAMAP" id="MF_01382">
    <property type="entry name" value="SecA"/>
    <property type="match status" value="1"/>
</dbReference>
<dbReference type="InterPro" id="IPR014001">
    <property type="entry name" value="Helicase_ATP-bd"/>
</dbReference>
<dbReference type="InterPro" id="IPR027417">
    <property type="entry name" value="P-loop_NTPase"/>
</dbReference>
<dbReference type="InterPro" id="IPR000185">
    <property type="entry name" value="SecA"/>
</dbReference>
<dbReference type="InterPro" id="IPR011115">
    <property type="entry name" value="SecA_DEAD"/>
</dbReference>
<dbReference type="InterPro" id="IPR014018">
    <property type="entry name" value="SecA_motor_DEAD"/>
</dbReference>
<dbReference type="InterPro" id="IPR011130">
    <property type="entry name" value="SecA_preprotein_X-link_dom"/>
</dbReference>
<dbReference type="InterPro" id="IPR044722">
    <property type="entry name" value="SecA_SF2_C"/>
</dbReference>
<dbReference type="InterPro" id="IPR011116">
    <property type="entry name" value="SecA_Wing/Scaffold"/>
</dbReference>
<dbReference type="InterPro" id="IPR036266">
    <property type="entry name" value="SecA_Wing/Scaffold_sf"/>
</dbReference>
<dbReference type="InterPro" id="IPR036670">
    <property type="entry name" value="SecA_X-link_sf"/>
</dbReference>
<dbReference type="PANTHER" id="PTHR30612:SF0">
    <property type="entry name" value="CHLOROPLAST PROTEIN-TRANSPORTING ATPASE"/>
    <property type="match status" value="1"/>
</dbReference>
<dbReference type="PANTHER" id="PTHR30612">
    <property type="entry name" value="SECA INNER MEMBRANE COMPONENT OF SEC PROTEIN SECRETION SYSTEM"/>
    <property type="match status" value="1"/>
</dbReference>
<dbReference type="Pfam" id="PF21090">
    <property type="entry name" value="P-loop_SecA"/>
    <property type="match status" value="2"/>
</dbReference>
<dbReference type="Pfam" id="PF07517">
    <property type="entry name" value="SecA_DEAD"/>
    <property type="match status" value="1"/>
</dbReference>
<dbReference type="Pfam" id="PF01043">
    <property type="entry name" value="SecA_PP_bind"/>
    <property type="match status" value="1"/>
</dbReference>
<dbReference type="Pfam" id="PF07516">
    <property type="entry name" value="SecA_SW"/>
    <property type="match status" value="1"/>
</dbReference>
<dbReference type="PRINTS" id="PR00906">
    <property type="entry name" value="SECA"/>
</dbReference>
<dbReference type="SMART" id="SM00957">
    <property type="entry name" value="SecA_DEAD"/>
    <property type="match status" value="1"/>
</dbReference>
<dbReference type="SMART" id="SM00958">
    <property type="entry name" value="SecA_PP_bind"/>
    <property type="match status" value="1"/>
</dbReference>
<dbReference type="SUPFAM" id="SSF81886">
    <property type="entry name" value="Helical scaffold and wing domains of SecA"/>
    <property type="match status" value="1"/>
</dbReference>
<dbReference type="SUPFAM" id="SSF52540">
    <property type="entry name" value="P-loop containing nucleoside triphosphate hydrolases"/>
    <property type="match status" value="2"/>
</dbReference>
<dbReference type="SUPFAM" id="SSF81767">
    <property type="entry name" value="Pre-protein crosslinking domain of SecA"/>
    <property type="match status" value="1"/>
</dbReference>
<dbReference type="PROSITE" id="PS51196">
    <property type="entry name" value="SECA_MOTOR_DEAD"/>
    <property type="match status" value="1"/>
</dbReference>
<name>SECA2_RHOP5</name>
<proteinExistence type="inferred from homology"/>
<sequence>MTNISSIPATSRSPTRVLRFLDRTLRLIASPQQRRLTRYRALADRILALDGETRALSDAALRQRADDLRHRARAGASLDALTIPTFALVREAARRTLGEAHVVEQLIGALALRDGAIAEMKTGEGKTLTATLVAALHALAGRGVHLAAPNDYLAARDADWMRPIYALLGFGVGLITPEIDDDARRAAYACDVTYGVASEFGLDFLRDHLKFCADETVQRGHGFALVDEADATLIDDAGVPLALDGPLGDQSDFYHAVDAIVAALTPEHYELDQRRRVALTDAGYDAIDHALRQAGLLKPDASLHDTASIALLHHVMQALRARTLLKRDRDYVVAHDEVVIVDAFTGRMLPGRRYDDALHQALEAKENCPIGEETRTLASITFQSYFRRYDKLAGMTGTAGDEIEEYRQIYGLDVVAIPPHRPMIRRDAQMLHRTRDEALAAVLAELEAAHAIGQPVLIGTPSIAACDRVAATLEANGWQRSRDRGPRRFAVLNAKHHADEARIIAQAGRPFAVTLATAMAGRGTDIKLGGTPFDAALQAQARGAGGLLVIGTEHHAHRRRDAQLRGRAGRQGDPGRSVVHASIDDELLRGHPAPVSAGNGPMEPATAQRLIDAAQRRREARSFDQRLALSRFDAVIERQRDALIAQRAAIRDDPAPLQLVAQLRNDTIDDLMQQFAPPQAAWDIENLDAAVRSILTLAVPIAEPGDDRAAAAIALQARIGAIADDWMAGKVHAIGEAAIGAILRRVMLALLDQLWTEQTERLEHLKRMIGDRHLPPHRLLPEFQLEAFALFELLAKEFRHEVTAHAMRLGRPS</sequence>